<reference key="1">
    <citation type="journal article" date="2011" name="Stand. Genomic Sci.">
        <title>Complete genome sequence of the halophilic and highly halotolerant Chromohalobacter salexigens type strain (1H11(T)).</title>
        <authorList>
            <person name="Copeland A."/>
            <person name="O'Connor K."/>
            <person name="Lucas S."/>
            <person name="Lapidus A."/>
            <person name="Berry K.W."/>
            <person name="Detter J.C."/>
            <person name="Del Rio T.G."/>
            <person name="Hammon N."/>
            <person name="Dalin E."/>
            <person name="Tice H."/>
            <person name="Pitluck S."/>
            <person name="Bruce D."/>
            <person name="Goodwin L."/>
            <person name="Han C."/>
            <person name="Tapia R."/>
            <person name="Saunders E."/>
            <person name="Schmutz J."/>
            <person name="Brettin T."/>
            <person name="Larimer F."/>
            <person name="Land M."/>
            <person name="Hauser L."/>
            <person name="Vargas C."/>
            <person name="Nieto J.J."/>
            <person name="Kyrpides N.C."/>
            <person name="Ivanova N."/>
            <person name="Goker M."/>
            <person name="Klenk H.P."/>
            <person name="Csonka L.N."/>
            <person name="Woyke T."/>
        </authorList>
    </citation>
    <scope>NUCLEOTIDE SEQUENCE [LARGE SCALE GENOMIC DNA]</scope>
    <source>
        <strain>ATCC BAA-138 / DSM 3043 / CIP 106854 / NCIMB 13768 / 1H11</strain>
    </source>
</reference>
<protein>
    <recommendedName>
        <fullName evidence="1">Phosphopentomutase</fullName>
        <ecNumber evidence="1">5.4.2.7</ecNumber>
    </recommendedName>
    <alternativeName>
        <fullName evidence="1">Phosphodeoxyribomutase</fullName>
    </alternativeName>
</protein>
<gene>
    <name evidence="1" type="primary">deoB</name>
    <name type="ordered locus">Csal_0829</name>
</gene>
<proteinExistence type="inferred from homology"/>
<organism>
    <name type="scientific">Chromohalobacter salexigens (strain ATCC BAA-138 / DSM 3043 / CIP 106854 / NCIMB 13768 / 1H11)</name>
    <dbReference type="NCBI Taxonomy" id="290398"/>
    <lineage>
        <taxon>Bacteria</taxon>
        <taxon>Pseudomonadati</taxon>
        <taxon>Pseudomonadota</taxon>
        <taxon>Gammaproteobacteria</taxon>
        <taxon>Oceanospirillales</taxon>
        <taxon>Halomonadaceae</taxon>
        <taxon>Chromohalobacter</taxon>
    </lineage>
</organism>
<sequence>MTRAILLVLDSFGIGNAPDAAAFGDAGADTLGHIAHHRAASGRPLALPHLASLGLYHAHHLATGEWAEGITPPETLDGAYAAAAEISSGKDTPSGHWEIAGVPALFEWGYFPDKTQSFPPDLLEALIEQAKLPGVLGNCHASGMPILETLGEAHIASGKPIVYTSADSVFQIAAHETHFGLDRLYALCEIARELLMPYNIGRVIARPFVGETPETFERTGNRRDYAIEPPTPTVLQKLHDDGGKVLGVGKIGDIYAHCGVSNVIKAHGHDALFDATLEALDEAGDRTLVMTNFVDFDTLYGHRRDPDGYAEALEAFDRRLPEVLAKLRPDDLLILTADHGNDPTWTGTDHTREQVPVLASGAGLAPRPLGHDDGHLVTFADIGQSLATHFGLSPMAHGSDFLDVAPTGPSSHASTTGD</sequence>
<accession>Q1QZC2</accession>
<name>DEOB_CHRSD</name>
<comment type="function">
    <text evidence="1">Isomerase that catalyzes the conversion of deoxy-ribose 1-phosphate (dRib-1-P) and ribose 1-phosphate (Rib-1-P) to deoxy-ribose 5-phosphate (dRib-5-P) and ribose 5-phosphate (Rib-5-P), respectively.</text>
</comment>
<comment type="catalytic activity">
    <reaction evidence="1">
        <text>2-deoxy-alpha-D-ribose 1-phosphate = 2-deoxy-D-ribose 5-phosphate</text>
        <dbReference type="Rhea" id="RHEA:27658"/>
        <dbReference type="ChEBI" id="CHEBI:57259"/>
        <dbReference type="ChEBI" id="CHEBI:62877"/>
        <dbReference type="EC" id="5.4.2.7"/>
    </reaction>
</comment>
<comment type="catalytic activity">
    <reaction evidence="1">
        <text>alpha-D-ribose 1-phosphate = D-ribose 5-phosphate</text>
        <dbReference type="Rhea" id="RHEA:18793"/>
        <dbReference type="ChEBI" id="CHEBI:57720"/>
        <dbReference type="ChEBI" id="CHEBI:78346"/>
        <dbReference type="EC" id="5.4.2.7"/>
    </reaction>
</comment>
<comment type="cofactor">
    <cofactor evidence="1">
        <name>Mn(2+)</name>
        <dbReference type="ChEBI" id="CHEBI:29035"/>
    </cofactor>
    <text evidence="1">Binds 2 manganese ions.</text>
</comment>
<comment type="pathway">
    <text evidence="1">Carbohydrate degradation; 2-deoxy-D-ribose 1-phosphate degradation; D-glyceraldehyde 3-phosphate and acetaldehyde from 2-deoxy-alpha-D-ribose 1-phosphate: step 1/2.</text>
</comment>
<comment type="subcellular location">
    <subcellularLocation>
        <location evidence="1">Cytoplasm</location>
    </subcellularLocation>
</comment>
<comment type="similarity">
    <text evidence="1">Belongs to the phosphopentomutase family.</text>
</comment>
<feature type="chain" id="PRO_0000258277" description="Phosphopentomutase">
    <location>
        <begin position="1"/>
        <end position="418"/>
    </location>
</feature>
<feature type="binding site" evidence="1">
    <location>
        <position position="10"/>
    </location>
    <ligand>
        <name>Mn(2+)</name>
        <dbReference type="ChEBI" id="CHEBI:29035"/>
        <label>1</label>
    </ligand>
</feature>
<feature type="binding site" evidence="1">
    <location>
        <position position="297"/>
    </location>
    <ligand>
        <name>Mn(2+)</name>
        <dbReference type="ChEBI" id="CHEBI:29035"/>
        <label>2</label>
    </ligand>
</feature>
<feature type="binding site" evidence="1">
    <location>
        <position position="302"/>
    </location>
    <ligand>
        <name>Mn(2+)</name>
        <dbReference type="ChEBI" id="CHEBI:29035"/>
        <label>2</label>
    </ligand>
</feature>
<feature type="binding site" evidence="1">
    <location>
        <position position="338"/>
    </location>
    <ligand>
        <name>Mn(2+)</name>
        <dbReference type="ChEBI" id="CHEBI:29035"/>
        <label>1</label>
    </ligand>
</feature>
<feature type="binding site" evidence="1">
    <location>
        <position position="339"/>
    </location>
    <ligand>
        <name>Mn(2+)</name>
        <dbReference type="ChEBI" id="CHEBI:29035"/>
        <label>1</label>
    </ligand>
</feature>
<feature type="binding site" evidence="1">
    <location>
        <position position="350"/>
    </location>
    <ligand>
        <name>Mn(2+)</name>
        <dbReference type="ChEBI" id="CHEBI:29035"/>
        <label>2</label>
    </ligand>
</feature>
<keyword id="KW-0963">Cytoplasm</keyword>
<keyword id="KW-0413">Isomerase</keyword>
<keyword id="KW-0464">Manganese</keyword>
<keyword id="KW-0479">Metal-binding</keyword>
<keyword id="KW-1185">Reference proteome</keyword>
<evidence type="ECO:0000255" key="1">
    <source>
        <dbReference type="HAMAP-Rule" id="MF_00740"/>
    </source>
</evidence>
<dbReference type="EC" id="5.4.2.7" evidence="1"/>
<dbReference type="EMBL" id="CP000285">
    <property type="protein sequence ID" value="ABE58186.1"/>
    <property type="molecule type" value="Genomic_DNA"/>
</dbReference>
<dbReference type="RefSeq" id="WP_011506132.1">
    <property type="nucleotide sequence ID" value="NC_007963.1"/>
</dbReference>
<dbReference type="SMR" id="Q1QZC2"/>
<dbReference type="STRING" id="290398.Csal_0829"/>
<dbReference type="GeneID" id="95333575"/>
<dbReference type="KEGG" id="csa:Csal_0829"/>
<dbReference type="eggNOG" id="COG1015">
    <property type="taxonomic scope" value="Bacteria"/>
</dbReference>
<dbReference type="HOGENOM" id="CLU_053861_0_0_6"/>
<dbReference type="OrthoDB" id="9769930at2"/>
<dbReference type="UniPathway" id="UPA00002">
    <property type="reaction ID" value="UER00467"/>
</dbReference>
<dbReference type="Proteomes" id="UP000000239">
    <property type="component" value="Chromosome"/>
</dbReference>
<dbReference type="GO" id="GO:0005829">
    <property type="term" value="C:cytosol"/>
    <property type="evidence" value="ECO:0007669"/>
    <property type="project" value="TreeGrafter"/>
</dbReference>
<dbReference type="GO" id="GO:0000287">
    <property type="term" value="F:magnesium ion binding"/>
    <property type="evidence" value="ECO:0007669"/>
    <property type="project" value="InterPro"/>
</dbReference>
<dbReference type="GO" id="GO:0030145">
    <property type="term" value="F:manganese ion binding"/>
    <property type="evidence" value="ECO:0007669"/>
    <property type="project" value="UniProtKB-UniRule"/>
</dbReference>
<dbReference type="GO" id="GO:0008973">
    <property type="term" value="F:phosphopentomutase activity"/>
    <property type="evidence" value="ECO:0007669"/>
    <property type="project" value="UniProtKB-UniRule"/>
</dbReference>
<dbReference type="GO" id="GO:0006018">
    <property type="term" value="P:2-deoxyribose 1-phosphate catabolic process"/>
    <property type="evidence" value="ECO:0007669"/>
    <property type="project" value="UniProtKB-UniRule"/>
</dbReference>
<dbReference type="GO" id="GO:0006015">
    <property type="term" value="P:5-phosphoribose 1-diphosphate biosynthetic process"/>
    <property type="evidence" value="ECO:0007669"/>
    <property type="project" value="UniProtKB-UniPathway"/>
</dbReference>
<dbReference type="GO" id="GO:0043094">
    <property type="term" value="P:metabolic compound salvage"/>
    <property type="evidence" value="ECO:0007669"/>
    <property type="project" value="InterPro"/>
</dbReference>
<dbReference type="GO" id="GO:0009117">
    <property type="term" value="P:nucleotide metabolic process"/>
    <property type="evidence" value="ECO:0007669"/>
    <property type="project" value="InterPro"/>
</dbReference>
<dbReference type="CDD" id="cd16009">
    <property type="entry name" value="PPM"/>
    <property type="match status" value="1"/>
</dbReference>
<dbReference type="FunFam" id="3.30.70.1250:FF:000001">
    <property type="entry name" value="Phosphopentomutase"/>
    <property type="match status" value="1"/>
</dbReference>
<dbReference type="Gene3D" id="3.40.720.10">
    <property type="entry name" value="Alkaline Phosphatase, subunit A"/>
    <property type="match status" value="1"/>
</dbReference>
<dbReference type="Gene3D" id="3.30.70.1250">
    <property type="entry name" value="Phosphopentomutase"/>
    <property type="match status" value="1"/>
</dbReference>
<dbReference type="HAMAP" id="MF_00740">
    <property type="entry name" value="Phosphopentomut"/>
    <property type="match status" value="1"/>
</dbReference>
<dbReference type="InterPro" id="IPR017850">
    <property type="entry name" value="Alkaline_phosphatase_core_sf"/>
</dbReference>
<dbReference type="InterPro" id="IPR010045">
    <property type="entry name" value="DeoB"/>
</dbReference>
<dbReference type="InterPro" id="IPR006124">
    <property type="entry name" value="Metalloenzyme"/>
</dbReference>
<dbReference type="InterPro" id="IPR024052">
    <property type="entry name" value="Phosphopentomutase_DeoB_cap_sf"/>
</dbReference>
<dbReference type="NCBIfam" id="TIGR01696">
    <property type="entry name" value="deoB"/>
    <property type="match status" value="1"/>
</dbReference>
<dbReference type="NCBIfam" id="NF003766">
    <property type="entry name" value="PRK05362.1"/>
    <property type="match status" value="1"/>
</dbReference>
<dbReference type="PANTHER" id="PTHR21110">
    <property type="entry name" value="PHOSPHOPENTOMUTASE"/>
    <property type="match status" value="1"/>
</dbReference>
<dbReference type="PANTHER" id="PTHR21110:SF0">
    <property type="entry name" value="PHOSPHOPENTOMUTASE"/>
    <property type="match status" value="1"/>
</dbReference>
<dbReference type="Pfam" id="PF01676">
    <property type="entry name" value="Metalloenzyme"/>
    <property type="match status" value="1"/>
</dbReference>
<dbReference type="PIRSF" id="PIRSF001491">
    <property type="entry name" value="Ppentomutase"/>
    <property type="match status" value="1"/>
</dbReference>
<dbReference type="SUPFAM" id="SSF53649">
    <property type="entry name" value="Alkaline phosphatase-like"/>
    <property type="match status" value="1"/>
</dbReference>
<dbReference type="SUPFAM" id="SSF143856">
    <property type="entry name" value="DeoB insert domain-like"/>
    <property type="match status" value="1"/>
</dbReference>